<organism>
    <name type="scientific">Staphylococcus aureus (strain Mu50 / ATCC 700699)</name>
    <dbReference type="NCBI Taxonomy" id="158878"/>
    <lineage>
        <taxon>Bacteria</taxon>
        <taxon>Bacillati</taxon>
        <taxon>Bacillota</taxon>
        <taxon>Bacilli</taxon>
        <taxon>Bacillales</taxon>
        <taxon>Staphylococcaceae</taxon>
        <taxon>Staphylococcus</taxon>
    </lineage>
</organism>
<name>MENB_STAAM</name>
<dbReference type="EC" id="4.1.3.36" evidence="1"/>
<dbReference type="EMBL" id="BA000017">
    <property type="protein sequence ID" value="BAB57207.1"/>
    <property type="molecule type" value="Genomic_DNA"/>
</dbReference>
<dbReference type="RefSeq" id="WP_000184945.1">
    <property type="nucleotide sequence ID" value="NC_002758.2"/>
</dbReference>
<dbReference type="SMR" id="Q99V48"/>
<dbReference type="KEGG" id="sav:SAV1045"/>
<dbReference type="HOGENOM" id="CLU_009834_7_7_9"/>
<dbReference type="PhylomeDB" id="Q99V48"/>
<dbReference type="UniPathway" id="UPA00079"/>
<dbReference type="UniPathway" id="UPA01057">
    <property type="reaction ID" value="UER00167"/>
</dbReference>
<dbReference type="Proteomes" id="UP000002481">
    <property type="component" value="Chromosome"/>
</dbReference>
<dbReference type="GO" id="GO:0005829">
    <property type="term" value="C:cytosol"/>
    <property type="evidence" value="ECO:0007669"/>
    <property type="project" value="TreeGrafter"/>
</dbReference>
<dbReference type="GO" id="GO:0008935">
    <property type="term" value="F:1,4-dihydroxy-2-naphthoyl-CoA synthase activity"/>
    <property type="evidence" value="ECO:0007669"/>
    <property type="project" value="UniProtKB-UniRule"/>
</dbReference>
<dbReference type="GO" id="GO:0009234">
    <property type="term" value="P:menaquinone biosynthetic process"/>
    <property type="evidence" value="ECO:0007669"/>
    <property type="project" value="UniProtKB-UniRule"/>
</dbReference>
<dbReference type="CDD" id="cd06558">
    <property type="entry name" value="crotonase-like"/>
    <property type="match status" value="1"/>
</dbReference>
<dbReference type="FunFam" id="1.10.12.10:FF:000003">
    <property type="entry name" value="1,4-dihydroxy-2-naphthoyl-CoA synthase"/>
    <property type="match status" value="1"/>
</dbReference>
<dbReference type="FunFam" id="3.90.226.10:FF:000003">
    <property type="entry name" value="1,4-dihydroxy-2-naphthoyl-CoA synthase"/>
    <property type="match status" value="1"/>
</dbReference>
<dbReference type="Gene3D" id="3.90.226.10">
    <property type="entry name" value="2-enoyl-CoA Hydratase, Chain A, domain 1"/>
    <property type="match status" value="1"/>
</dbReference>
<dbReference type="Gene3D" id="1.10.12.10">
    <property type="entry name" value="Lyase 2-enoyl-coa Hydratase, Chain A, domain 2"/>
    <property type="match status" value="1"/>
</dbReference>
<dbReference type="HAMAP" id="MF_01934">
    <property type="entry name" value="MenB"/>
    <property type="match status" value="1"/>
</dbReference>
<dbReference type="InterPro" id="IPR029045">
    <property type="entry name" value="ClpP/crotonase-like_dom_sf"/>
</dbReference>
<dbReference type="InterPro" id="IPR010198">
    <property type="entry name" value="DHNA-CoA_synthase_MenB"/>
</dbReference>
<dbReference type="InterPro" id="IPR001753">
    <property type="entry name" value="Enoyl-CoA_hydra/iso"/>
</dbReference>
<dbReference type="InterPro" id="IPR014748">
    <property type="entry name" value="Enoyl-CoA_hydra_C"/>
</dbReference>
<dbReference type="NCBIfam" id="TIGR01929">
    <property type="entry name" value="menB"/>
    <property type="match status" value="1"/>
</dbReference>
<dbReference type="NCBIfam" id="NF005637">
    <property type="entry name" value="PRK07396.1"/>
    <property type="match status" value="1"/>
</dbReference>
<dbReference type="PANTHER" id="PTHR43113:SF1">
    <property type="entry name" value="1,4-DIHYDROXY-2-NAPHTHOYL-COA SYNTHASE, PEROXISOMAL"/>
    <property type="match status" value="1"/>
</dbReference>
<dbReference type="PANTHER" id="PTHR43113">
    <property type="entry name" value="NUCLEOSIDE-DIPHOSPHATE-SUGAR EPIMERASE"/>
    <property type="match status" value="1"/>
</dbReference>
<dbReference type="Pfam" id="PF00378">
    <property type="entry name" value="ECH_1"/>
    <property type="match status" value="1"/>
</dbReference>
<dbReference type="SUPFAM" id="SSF52096">
    <property type="entry name" value="ClpP/crotonase"/>
    <property type="match status" value="1"/>
</dbReference>
<keyword id="KW-0456">Lyase</keyword>
<keyword id="KW-0474">Menaquinone biosynthesis</keyword>
<gene>
    <name evidence="1" type="primary">menB</name>
    <name type="ordered locus">SAV1045</name>
</gene>
<sequence>MTNRQWETLREYDEIKYEFYEGIAKVTINRPEVRNAFTPKTVAEMIDAFSRARDDQNVSVIVLTGEGDLAFCSGGDQKKRGHGGYVGEDQIPRLNVLDLQRLIRIIPKPVIAMVKGYAVGGGNVLNVVCDLTIAADNAIFGQTGPKVGSFDAGYGSGYLARIVGHKKAREIWYLCRQYNAQEALDMGLVNTVVPLDKVEDETVQWCKEIMKHSPTALRFLKAAMNADTDGLAGLQQMAGDATLLYYTTDEAKEGRDAFKEKRDPDFDQFPKFP</sequence>
<feature type="chain" id="PRO_0000224815" description="1,4-dihydroxy-2-naphthoyl-CoA synthase">
    <location>
        <begin position="1"/>
        <end position="273"/>
    </location>
</feature>
<feature type="region of interest" description="Disordered" evidence="2">
    <location>
        <begin position="254"/>
        <end position="273"/>
    </location>
</feature>
<feature type="compositionally biased region" description="Basic and acidic residues" evidence="2">
    <location>
        <begin position="254"/>
        <end position="265"/>
    </location>
</feature>
<feature type="binding site" description="in other chain" evidence="1">
    <location>
        <position position="34"/>
    </location>
    <ligand>
        <name>substrate</name>
        <note>ligand shared between two neighboring subunits</note>
    </ligand>
</feature>
<feature type="binding site" description="in other chain" evidence="1">
    <location>
        <begin position="73"/>
        <end position="77"/>
    </location>
    <ligand>
        <name>substrate</name>
        <note>ligand shared between two neighboring subunits</note>
    </ligand>
</feature>
<feature type="binding site" description="in other chain" evidence="1">
    <location>
        <position position="85"/>
    </location>
    <ligand>
        <name>substrate</name>
        <note>ligand shared between two neighboring subunits</note>
    </ligand>
</feature>
<feature type="binding site" description="in other chain" evidence="1">
    <location>
        <begin position="117"/>
        <end position="121"/>
    </location>
    <ligand>
        <name>substrate</name>
        <note>ligand shared between two neighboring subunits</note>
    </ligand>
</feature>
<feature type="binding site" evidence="1">
    <location>
        <begin position="142"/>
        <end position="144"/>
    </location>
    <ligand>
        <name>hydrogencarbonate</name>
        <dbReference type="ChEBI" id="CHEBI:17544"/>
    </ligand>
</feature>
<feature type="binding site" description="in other chain" evidence="1">
    <location>
        <position position="143"/>
    </location>
    <ligand>
        <name>substrate</name>
        <note>ligand shared between two neighboring subunits</note>
    </ligand>
</feature>
<feature type="binding site" description="in other chain" evidence="1">
    <location>
        <position position="149"/>
    </location>
    <ligand>
        <name>substrate</name>
        <note>ligand shared between two neighboring subunits</note>
    </ligand>
</feature>
<feature type="binding site" evidence="1">
    <location>
        <position position="246"/>
    </location>
    <ligand>
        <name>substrate</name>
        <note>ligand shared between two neighboring subunits</note>
    </ligand>
</feature>
<feature type="binding site" evidence="1">
    <location>
        <position position="261"/>
    </location>
    <ligand>
        <name>substrate</name>
        <note>ligand shared between two neighboring subunits</note>
    </ligand>
</feature>
<feature type="site" description="Important for catalysis" evidence="1">
    <location>
        <position position="85"/>
    </location>
</feature>
<feature type="site" description="Important for catalysis" evidence="1">
    <location>
        <position position="246"/>
    </location>
</feature>
<comment type="function">
    <text evidence="1">Converts o-succinylbenzoyl-CoA (OSB-CoA) to 1,4-dihydroxy-2-naphthoyl-CoA (DHNA-CoA).</text>
</comment>
<comment type="catalytic activity">
    <reaction evidence="1">
        <text>2-succinylbenzoyl-CoA + H(+) = 1,4-dihydroxy-2-naphthoyl-CoA + H2O</text>
        <dbReference type="Rhea" id="RHEA:26562"/>
        <dbReference type="ChEBI" id="CHEBI:15377"/>
        <dbReference type="ChEBI" id="CHEBI:15378"/>
        <dbReference type="ChEBI" id="CHEBI:57364"/>
        <dbReference type="ChEBI" id="CHEBI:58897"/>
        <dbReference type="EC" id="4.1.3.36"/>
    </reaction>
</comment>
<comment type="cofactor">
    <cofactor evidence="1">
        <name>hydrogencarbonate</name>
        <dbReference type="ChEBI" id="CHEBI:17544"/>
    </cofactor>
</comment>
<comment type="pathway">
    <text evidence="1">Quinol/quinone metabolism; 1,4-dihydroxy-2-naphthoate biosynthesis; 1,4-dihydroxy-2-naphthoate from chorismate: step 6/7.</text>
</comment>
<comment type="pathway">
    <text evidence="1">Quinol/quinone metabolism; menaquinone biosynthesis.</text>
</comment>
<comment type="similarity">
    <text evidence="1">Belongs to the enoyl-CoA hydratase/isomerase family. MenB subfamily.</text>
</comment>
<reference key="1">
    <citation type="journal article" date="2001" name="Lancet">
        <title>Whole genome sequencing of meticillin-resistant Staphylococcus aureus.</title>
        <authorList>
            <person name="Kuroda M."/>
            <person name="Ohta T."/>
            <person name="Uchiyama I."/>
            <person name="Baba T."/>
            <person name="Yuzawa H."/>
            <person name="Kobayashi I."/>
            <person name="Cui L."/>
            <person name="Oguchi A."/>
            <person name="Aoki K."/>
            <person name="Nagai Y."/>
            <person name="Lian J.-Q."/>
            <person name="Ito T."/>
            <person name="Kanamori M."/>
            <person name="Matsumaru H."/>
            <person name="Maruyama A."/>
            <person name="Murakami H."/>
            <person name="Hosoyama A."/>
            <person name="Mizutani-Ui Y."/>
            <person name="Takahashi N.K."/>
            <person name="Sawano T."/>
            <person name="Inoue R."/>
            <person name="Kaito C."/>
            <person name="Sekimizu K."/>
            <person name="Hirakawa H."/>
            <person name="Kuhara S."/>
            <person name="Goto S."/>
            <person name="Yabuzaki J."/>
            <person name="Kanehisa M."/>
            <person name="Yamashita A."/>
            <person name="Oshima K."/>
            <person name="Furuya K."/>
            <person name="Yoshino C."/>
            <person name="Shiba T."/>
            <person name="Hattori M."/>
            <person name="Ogasawara N."/>
            <person name="Hayashi H."/>
            <person name="Hiramatsu K."/>
        </authorList>
    </citation>
    <scope>NUCLEOTIDE SEQUENCE [LARGE SCALE GENOMIC DNA]</scope>
    <source>
        <strain>Mu50 / ATCC 700699</strain>
    </source>
</reference>
<proteinExistence type="inferred from homology"/>
<accession>Q99V48</accession>
<protein>
    <recommendedName>
        <fullName evidence="1">1,4-dihydroxy-2-naphthoyl-CoA synthase</fullName>
        <shortName evidence="1">DHNA-CoA synthase</shortName>
        <ecNumber evidence="1">4.1.3.36</ecNumber>
    </recommendedName>
</protein>
<evidence type="ECO:0000255" key="1">
    <source>
        <dbReference type="HAMAP-Rule" id="MF_01934"/>
    </source>
</evidence>
<evidence type="ECO:0000256" key="2">
    <source>
        <dbReference type="SAM" id="MobiDB-lite"/>
    </source>
</evidence>